<organism>
    <name type="scientific">Streptococcus pyogenes serotype M6 (strain ATCC BAA-946 / MGAS10394)</name>
    <dbReference type="NCBI Taxonomy" id="286636"/>
    <lineage>
        <taxon>Bacteria</taxon>
        <taxon>Bacillati</taxon>
        <taxon>Bacillota</taxon>
        <taxon>Bacilli</taxon>
        <taxon>Lactobacillales</taxon>
        <taxon>Streptococcaceae</taxon>
        <taxon>Streptococcus</taxon>
    </lineage>
</organism>
<name>DTD_STRP6</name>
<sequence length="147" mass="15912">MKLVLQRVKEASVSIDGKIAGAINQGLLLLVGVGPDDNAEDLAYAVRKIVNMRIFSDADGKMNQSIQDIKGSILSVSQFTLYADTKKGNRPAFTGAAKPDLARQLYDSFNEQLAEFVPVERGVFGADMQVSLINDGPVTIILDTKCH</sequence>
<comment type="function">
    <text evidence="1">An aminoacyl-tRNA editing enzyme that deacylates mischarged D-aminoacyl-tRNAs. Also deacylates mischarged glycyl-tRNA(Ala), protecting cells against glycine mischarging by AlaRS. Acts via tRNA-based rather than protein-based catalysis; rejects L-amino acids rather than detecting D-amino acids in the active site. By recycling D-aminoacyl-tRNA to D-amino acids and free tRNA molecules, this enzyme counteracts the toxicity associated with the formation of D-aminoacyl-tRNA entities in vivo and helps enforce protein L-homochirality.</text>
</comment>
<comment type="catalytic activity">
    <reaction evidence="1">
        <text>glycyl-tRNA(Ala) + H2O = tRNA(Ala) + glycine + H(+)</text>
        <dbReference type="Rhea" id="RHEA:53744"/>
        <dbReference type="Rhea" id="RHEA-COMP:9657"/>
        <dbReference type="Rhea" id="RHEA-COMP:13640"/>
        <dbReference type="ChEBI" id="CHEBI:15377"/>
        <dbReference type="ChEBI" id="CHEBI:15378"/>
        <dbReference type="ChEBI" id="CHEBI:57305"/>
        <dbReference type="ChEBI" id="CHEBI:78442"/>
        <dbReference type="ChEBI" id="CHEBI:78522"/>
        <dbReference type="EC" id="3.1.1.96"/>
    </reaction>
</comment>
<comment type="catalytic activity">
    <reaction evidence="1">
        <text>a D-aminoacyl-tRNA + H2O = a tRNA + a D-alpha-amino acid + H(+)</text>
        <dbReference type="Rhea" id="RHEA:13953"/>
        <dbReference type="Rhea" id="RHEA-COMP:10123"/>
        <dbReference type="Rhea" id="RHEA-COMP:10124"/>
        <dbReference type="ChEBI" id="CHEBI:15377"/>
        <dbReference type="ChEBI" id="CHEBI:15378"/>
        <dbReference type="ChEBI" id="CHEBI:59871"/>
        <dbReference type="ChEBI" id="CHEBI:78442"/>
        <dbReference type="ChEBI" id="CHEBI:79333"/>
        <dbReference type="EC" id="3.1.1.96"/>
    </reaction>
</comment>
<comment type="subunit">
    <text evidence="1">Homodimer.</text>
</comment>
<comment type="subcellular location">
    <subcellularLocation>
        <location evidence="1">Cytoplasm</location>
    </subcellularLocation>
</comment>
<comment type="domain">
    <text evidence="1">A Gly-cisPro motif from one monomer fits into the active site of the other monomer to allow specific chiral rejection of L-amino acids.</text>
</comment>
<comment type="similarity">
    <text evidence="1">Belongs to the DTD family.</text>
</comment>
<accession>Q5X9T5</accession>
<proteinExistence type="inferred from homology"/>
<keyword id="KW-0963">Cytoplasm</keyword>
<keyword id="KW-0378">Hydrolase</keyword>
<keyword id="KW-0694">RNA-binding</keyword>
<keyword id="KW-0820">tRNA-binding</keyword>
<gene>
    <name evidence="1" type="primary">dtd</name>
    <name type="ordered locus">M6_Spy1693</name>
</gene>
<dbReference type="EC" id="3.1.1.96" evidence="1"/>
<dbReference type="EMBL" id="CP000003">
    <property type="protein sequence ID" value="AAT87828.1"/>
    <property type="molecule type" value="Genomic_DNA"/>
</dbReference>
<dbReference type="RefSeq" id="WP_009881013.1">
    <property type="nucleotide sequence ID" value="NC_006086.1"/>
</dbReference>
<dbReference type="SMR" id="Q5X9T5"/>
<dbReference type="KEGG" id="spa:M6_Spy1693"/>
<dbReference type="HOGENOM" id="CLU_076901_1_0_9"/>
<dbReference type="Proteomes" id="UP000001167">
    <property type="component" value="Chromosome"/>
</dbReference>
<dbReference type="GO" id="GO:0005737">
    <property type="term" value="C:cytoplasm"/>
    <property type="evidence" value="ECO:0007669"/>
    <property type="project" value="UniProtKB-SubCell"/>
</dbReference>
<dbReference type="GO" id="GO:0051500">
    <property type="term" value="F:D-tyrosyl-tRNA(Tyr) deacylase activity"/>
    <property type="evidence" value="ECO:0007669"/>
    <property type="project" value="TreeGrafter"/>
</dbReference>
<dbReference type="GO" id="GO:0106026">
    <property type="term" value="F:Gly-tRNA(Ala) deacylase activity"/>
    <property type="evidence" value="ECO:0007669"/>
    <property type="project" value="UniProtKB-UniRule"/>
</dbReference>
<dbReference type="GO" id="GO:0043908">
    <property type="term" value="F:Ser(Gly)-tRNA(Ala) hydrolase activity"/>
    <property type="evidence" value="ECO:0007669"/>
    <property type="project" value="UniProtKB-UniRule"/>
</dbReference>
<dbReference type="GO" id="GO:0000049">
    <property type="term" value="F:tRNA binding"/>
    <property type="evidence" value="ECO:0007669"/>
    <property type="project" value="UniProtKB-UniRule"/>
</dbReference>
<dbReference type="GO" id="GO:0019478">
    <property type="term" value="P:D-amino acid catabolic process"/>
    <property type="evidence" value="ECO:0007669"/>
    <property type="project" value="UniProtKB-UniRule"/>
</dbReference>
<dbReference type="CDD" id="cd00563">
    <property type="entry name" value="Dtyr_deacylase"/>
    <property type="match status" value="1"/>
</dbReference>
<dbReference type="FunFam" id="3.50.80.10:FF:000001">
    <property type="entry name" value="D-aminoacyl-tRNA deacylase"/>
    <property type="match status" value="1"/>
</dbReference>
<dbReference type="Gene3D" id="3.50.80.10">
    <property type="entry name" value="D-tyrosyl-tRNA(Tyr) deacylase"/>
    <property type="match status" value="1"/>
</dbReference>
<dbReference type="HAMAP" id="MF_00518">
    <property type="entry name" value="Deacylase_Dtd"/>
    <property type="match status" value="1"/>
</dbReference>
<dbReference type="InterPro" id="IPR003732">
    <property type="entry name" value="Daa-tRNA_deacyls_DTD"/>
</dbReference>
<dbReference type="InterPro" id="IPR023509">
    <property type="entry name" value="DTD-like_sf"/>
</dbReference>
<dbReference type="NCBIfam" id="TIGR00256">
    <property type="entry name" value="D-aminoacyl-tRNA deacylase"/>
    <property type="match status" value="1"/>
</dbReference>
<dbReference type="PANTHER" id="PTHR10472:SF5">
    <property type="entry name" value="D-AMINOACYL-TRNA DEACYLASE 1"/>
    <property type="match status" value="1"/>
</dbReference>
<dbReference type="PANTHER" id="PTHR10472">
    <property type="entry name" value="D-TYROSYL-TRNA TYR DEACYLASE"/>
    <property type="match status" value="1"/>
</dbReference>
<dbReference type="Pfam" id="PF02580">
    <property type="entry name" value="Tyr_Deacylase"/>
    <property type="match status" value="1"/>
</dbReference>
<dbReference type="SUPFAM" id="SSF69500">
    <property type="entry name" value="DTD-like"/>
    <property type="match status" value="1"/>
</dbReference>
<protein>
    <recommendedName>
        <fullName evidence="1">D-aminoacyl-tRNA deacylase</fullName>
        <shortName evidence="1">DTD</shortName>
        <ecNumber evidence="1">3.1.1.96</ecNumber>
    </recommendedName>
    <alternativeName>
        <fullName evidence="1">Gly-tRNA(Ala) deacylase</fullName>
    </alternativeName>
</protein>
<reference key="1">
    <citation type="journal article" date="2004" name="J. Infect. Dis.">
        <title>Progress toward characterization of the group A Streptococcus metagenome: complete genome sequence of a macrolide-resistant serotype M6 strain.</title>
        <authorList>
            <person name="Banks D.J."/>
            <person name="Porcella S.F."/>
            <person name="Barbian K.D."/>
            <person name="Beres S.B."/>
            <person name="Philips L.E."/>
            <person name="Voyich J.M."/>
            <person name="DeLeo F.R."/>
            <person name="Martin J.M."/>
            <person name="Somerville G.A."/>
            <person name="Musser J.M."/>
        </authorList>
    </citation>
    <scope>NUCLEOTIDE SEQUENCE [LARGE SCALE GENOMIC DNA]</scope>
    <source>
        <strain>ATCC BAA-946 / MGAS10394</strain>
    </source>
</reference>
<feature type="chain" id="PRO_0000164605" description="D-aminoacyl-tRNA deacylase">
    <location>
        <begin position="1"/>
        <end position="147"/>
    </location>
</feature>
<feature type="short sequence motif" description="Gly-cisPro motif, important for rejection of L-amino acids" evidence="1">
    <location>
        <begin position="136"/>
        <end position="137"/>
    </location>
</feature>
<evidence type="ECO:0000255" key="1">
    <source>
        <dbReference type="HAMAP-Rule" id="MF_00518"/>
    </source>
</evidence>